<evidence type="ECO:0000255" key="1">
    <source>
        <dbReference type="HAMAP-Rule" id="MF_00061"/>
    </source>
</evidence>
<proteinExistence type="inferred from homology"/>
<feature type="chain" id="PRO_1000007811" description="4-diphosphocytidyl-2-C-methyl-D-erythritol kinase">
    <location>
        <begin position="1"/>
        <end position="292"/>
    </location>
</feature>
<feature type="active site" evidence="1">
    <location>
        <position position="13"/>
    </location>
</feature>
<feature type="active site" evidence="1">
    <location>
        <position position="139"/>
    </location>
</feature>
<feature type="binding site" evidence="1">
    <location>
        <begin position="97"/>
        <end position="107"/>
    </location>
    <ligand>
        <name>ATP</name>
        <dbReference type="ChEBI" id="CHEBI:30616"/>
    </ligand>
</feature>
<reference key="1">
    <citation type="journal article" date="2007" name="J. Bacteriol.">
        <title>The complete genome sequence of Bacillus thuringiensis Al Hakam.</title>
        <authorList>
            <person name="Challacombe J.F."/>
            <person name="Altherr M.R."/>
            <person name="Xie G."/>
            <person name="Bhotika S.S."/>
            <person name="Brown N."/>
            <person name="Bruce D."/>
            <person name="Campbell C.S."/>
            <person name="Campbell M.L."/>
            <person name="Chen J."/>
            <person name="Chertkov O."/>
            <person name="Cleland C."/>
            <person name="Dimitrijevic M."/>
            <person name="Doggett N.A."/>
            <person name="Fawcett J.J."/>
            <person name="Glavina T."/>
            <person name="Goodwin L.A."/>
            <person name="Green L.D."/>
            <person name="Han C.S."/>
            <person name="Hill K.K."/>
            <person name="Hitchcock P."/>
            <person name="Jackson P.J."/>
            <person name="Keim P."/>
            <person name="Kewalramani A.R."/>
            <person name="Longmire J."/>
            <person name="Lucas S."/>
            <person name="Malfatti S."/>
            <person name="Martinez D."/>
            <person name="McMurry K."/>
            <person name="Meincke L.J."/>
            <person name="Misra M."/>
            <person name="Moseman B.L."/>
            <person name="Mundt M."/>
            <person name="Munk A.C."/>
            <person name="Okinaka R.T."/>
            <person name="Parson-Quintana B."/>
            <person name="Reilly L.P."/>
            <person name="Richardson P."/>
            <person name="Robinson D.L."/>
            <person name="Saunders E."/>
            <person name="Tapia R."/>
            <person name="Tesmer J.G."/>
            <person name="Thayer N."/>
            <person name="Thompson L.S."/>
            <person name="Tice H."/>
            <person name="Ticknor L.O."/>
            <person name="Wills P.L."/>
            <person name="Gilna P."/>
            <person name="Brettin T.S."/>
        </authorList>
    </citation>
    <scope>NUCLEOTIDE SEQUENCE [LARGE SCALE GENOMIC DNA]</scope>
    <source>
        <strain>Al Hakam</strain>
    </source>
</reference>
<sequence>MNRLKLLVKAPAKINLSLDVLGKRQDGYHEVKMIMTTIDLADRLELMELAEDRIEILSHNRYVPDDQRNLAYQAAKLLKEKFNVKKGVSITIEKTIPVAAGLAGGSSDAAATLRGLNKLWNLGLTIDQLAELGAEIGSDVSFCVYGGTAIATGRGEQIEHIKTPPSCWVILAKPHIGVSTADVYGNLKLNRVTHPNVDKMVDVINAGDYKGICDTVGNVLEDVTFAMHPEVARIKAQMKRFGADAVLMSGSGPTVFGLVHHDSRMHRIYNGLKGFCEQVYAVRLLGERETLE</sequence>
<organism>
    <name type="scientific">Bacillus thuringiensis (strain Al Hakam)</name>
    <dbReference type="NCBI Taxonomy" id="412694"/>
    <lineage>
        <taxon>Bacteria</taxon>
        <taxon>Bacillati</taxon>
        <taxon>Bacillota</taxon>
        <taxon>Bacilli</taxon>
        <taxon>Bacillales</taxon>
        <taxon>Bacillaceae</taxon>
        <taxon>Bacillus</taxon>
        <taxon>Bacillus cereus group</taxon>
    </lineage>
</organism>
<protein>
    <recommendedName>
        <fullName evidence="1">4-diphosphocytidyl-2-C-methyl-D-erythritol kinase</fullName>
        <shortName evidence="1">CMK</shortName>
        <ecNumber evidence="1">2.7.1.148</ecNumber>
    </recommendedName>
    <alternativeName>
        <fullName evidence="1">4-(cytidine-5'-diphospho)-2-C-methyl-D-erythritol kinase</fullName>
    </alternativeName>
</protein>
<dbReference type="EC" id="2.7.1.148" evidence="1"/>
<dbReference type="EMBL" id="CP000485">
    <property type="protein sequence ID" value="ABK83460.1"/>
    <property type="molecule type" value="Genomic_DNA"/>
</dbReference>
<dbReference type="SMR" id="A0R8B7"/>
<dbReference type="KEGG" id="btl:BALH_0040"/>
<dbReference type="HOGENOM" id="CLU_053057_1_1_9"/>
<dbReference type="UniPathway" id="UPA00056">
    <property type="reaction ID" value="UER00094"/>
</dbReference>
<dbReference type="GO" id="GO:0050515">
    <property type="term" value="F:4-(cytidine 5'-diphospho)-2-C-methyl-D-erythritol kinase activity"/>
    <property type="evidence" value="ECO:0007669"/>
    <property type="project" value="UniProtKB-UniRule"/>
</dbReference>
<dbReference type="GO" id="GO:0005524">
    <property type="term" value="F:ATP binding"/>
    <property type="evidence" value="ECO:0007669"/>
    <property type="project" value="UniProtKB-UniRule"/>
</dbReference>
<dbReference type="GO" id="GO:0019288">
    <property type="term" value="P:isopentenyl diphosphate biosynthetic process, methylerythritol 4-phosphate pathway"/>
    <property type="evidence" value="ECO:0007669"/>
    <property type="project" value="UniProtKB-UniRule"/>
</dbReference>
<dbReference type="GO" id="GO:0016114">
    <property type="term" value="P:terpenoid biosynthetic process"/>
    <property type="evidence" value="ECO:0007669"/>
    <property type="project" value="InterPro"/>
</dbReference>
<dbReference type="FunFam" id="3.30.230.10:FF:000029">
    <property type="entry name" value="4-diphosphocytidyl-2-C-methyl-D-erythritol kinase"/>
    <property type="match status" value="1"/>
</dbReference>
<dbReference type="FunFam" id="3.30.70.890:FF:000006">
    <property type="entry name" value="4-diphosphocytidyl-2-C-methyl-D-erythritol kinase"/>
    <property type="match status" value="1"/>
</dbReference>
<dbReference type="Gene3D" id="3.30.230.10">
    <property type="match status" value="1"/>
</dbReference>
<dbReference type="Gene3D" id="3.30.70.890">
    <property type="entry name" value="GHMP kinase, C-terminal domain"/>
    <property type="match status" value="1"/>
</dbReference>
<dbReference type="HAMAP" id="MF_00061">
    <property type="entry name" value="IspE"/>
    <property type="match status" value="1"/>
</dbReference>
<dbReference type="InterPro" id="IPR013750">
    <property type="entry name" value="GHMP_kinase_C_dom"/>
</dbReference>
<dbReference type="InterPro" id="IPR036554">
    <property type="entry name" value="GHMP_kinase_C_sf"/>
</dbReference>
<dbReference type="InterPro" id="IPR006204">
    <property type="entry name" value="GHMP_kinase_N_dom"/>
</dbReference>
<dbReference type="InterPro" id="IPR004424">
    <property type="entry name" value="IspE"/>
</dbReference>
<dbReference type="InterPro" id="IPR020568">
    <property type="entry name" value="Ribosomal_Su5_D2-typ_SF"/>
</dbReference>
<dbReference type="InterPro" id="IPR014721">
    <property type="entry name" value="Ribsml_uS5_D2-typ_fold_subgr"/>
</dbReference>
<dbReference type="NCBIfam" id="TIGR00154">
    <property type="entry name" value="ispE"/>
    <property type="match status" value="1"/>
</dbReference>
<dbReference type="NCBIfam" id="NF011202">
    <property type="entry name" value="PRK14608.1"/>
    <property type="match status" value="1"/>
</dbReference>
<dbReference type="PANTHER" id="PTHR43527">
    <property type="entry name" value="4-DIPHOSPHOCYTIDYL-2-C-METHYL-D-ERYTHRITOL KINASE, CHLOROPLASTIC"/>
    <property type="match status" value="1"/>
</dbReference>
<dbReference type="PANTHER" id="PTHR43527:SF2">
    <property type="entry name" value="4-DIPHOSPHOCYTIDYL-2-C-METHYL-D-ERYTHRITOL KINASE, CHLOROPLASTIC"/>
    <property type="match status" value="1"/>
</dbReference>
<dbReference type="Pfam" id="PF08544">
    <property type="entry name" value="GHMP_kinases_C"/>
    <property type="match status" value="1"/>
</dbReference>
<dbReference type="Pfam" id="PF00288">
    <property type="entry name" value="GHMP_kinases_N"/>
    <property type="match status" value="1"/>
</dbReference>
<dbReference type="PIRSF" id="PIRSF010376">
    <property type="entry name" value="IspE"/>
    <property type="match status" value="1"/>
</dbReference>
<dbReference type="SUPFAM" id="SSF55060">
    <property type="entry name" value="GHMP Kinase, C-terminal domain"/>
    <property type="match status" value="1"/>
</dbReference>
<dbReference type="SUPFAM" id="SSF54211">
    <property type="entry name" value="Ribosomal protein S5 domain 2-like"/>
    <property type="match status" value="1"/>
</dbReference>
<accession>A0R8B7</accession>
<keyword id="KW-0067">ATP-binding</keyword>
<keyword id="KW-0414">Isoprene biosynthesis</keyword>
<keyword id="KW-0418">Kinase</keyword>
<keyword id="KW-0547">Nucleotide-binding</keyword>
<keyword id="KW-0808">Transferase</keyword>
<comment type="function">
    <text evidence="1">Catalyzes the phosphorylation of the position 2 hydroxy group of 4-diphosphocytidyl-2C-methyl-D-erythritol.</text>
</comment>
<comment type="catalytic activity">
    <reaction evidence="1">
        <text>4-CDP-2-C-methyl-D-erythritol + ATP = 4-CDP-2-C-methyl-D-erythritol 2-phosphate + ADP + H(+)</text>
        <dbReference type="Rhea" id="RHEA:18437"/>
        <dbReference type="ChEBI" id="CHEBI:15378"/>
        <dbReference type="ChEBI" id="CHEBI:30616"/>
        <dbReference type="ChEBI" id="CHEBI:57823"/>
        <dbReference type="ChEBI" id="CHEBI:57919"/>
        <dbReference type="ChEBI" id="CHEBI:456216"/>
        <dbReference type="EC" id="2.7.1.148"/>
    </reaction>
</comment>
<comment type="pathway">
    <text evidence="1">Isoprenoid biosynthesis; isopentenyl diphosphate biosynthesis via DXP pathway; isopentenyl diphosphate from 1-deoxy-D-xylulose 5-phosphate: step 3/6.</text>
</comment>
<comment type="similarity">
    <text evidence="1">Belongs to the GHMP kinase family. IspE subfamily.</text>
</comment>
<gene>
    <name evidence="1" type="primary">ispE</name>
    <name type="ordered locus">BALH_0040</name>
</gene>
<name>ISPE_BACAH</name>